<accession>C3LS21</accession>
<protein>
    <recommendedName>
        <fullName evidence="1">5'-nucleotidase SurE</fullName>
        <ecNumber evidence="1">3.1.3.5</ecNumber>
    </recommendedName>
    <alternativeName>
        <fullName evidence="1">Nucleoside 5'-monophosphate phosphohydrolase</fullName>
    </alternativeName>
</protein>
<feature type="chain" id="PRO_1000196619" description="5'-nucleotidase SurE">
    <location>
        <begin position="1"/>
        <end position="263"/>
    </location>
</feature>
<feature type="binding site" evidence="1">
    <location>
        <position position="21"/>
    </location>
    <ligand>
        <name>a divalent metal cation</name>
        <dbReference type="ChEBI" id="CHEBI:60240"/>
    </ligand>
</feature>
<feature type="binding site" evidence="1">
    <location>
        <position position="22"/>
    </location>
    <ligand>
        <name>a divalent metal cation</name>
        <dbReference type="ChEBI" id="CHEBI:60240"/>
    </ligand>
</feature>
<feature type="binding site" evidence="1">
    <location>
        <position position="52"/>
    </location>
    <ligand>
        <name>a divalent metal cation</name>
        <dbReference type="ChEBI" id="CHEBI:60240"/>
    </ligand>
</feature>
<feature type="binding site" evidence="1">
    <location>
        <position position="105"/>
    </location>
    <ligand>
        <name>a divalent metal cation</name>
        <dbReference type="ChEBI" id="CHEBI:60240"/>
    </ligand>
</feature>
<dbReference type="EC" id="3.1.3.5" evidence="1"/>
<dbReference type="EMBL" id="CP001233">
    <property type="protein sequence ID" value="ACP04814.1"/>
    <property type="molecule type" value="Genomic_DNA"/>
</dbReference>
<dbReference type="SMR" id="C3LS21"/>
<dbReference type="KEGG" id="vcm:VCM66_0489"/>
<dbReference type="HOGENOM" id="CLU_045192_1_2_6"/>
<dbReference type="Proteomes" id="UP000001217">
    <property type="component" value="Chromosome I"/>
</dbReference>
<dbReference type="GO" id="GO:0005737">
    <property type="term" value="C:cytoplasm"/>
    <property type="evidence" value="ECO:0007669"/>
    <property type="project" value="UniProtKB-SubCell"/>
</dbReference>
<dbReference type="GO" id="GO:0008254">
    <property type="term" value="F:3'-nucleotidase activity"/>
    <property type="evidence" value="ECO:0007669"/>
    <property type="project" value="TreeGrafter"/>
</dbReference>
<dbReference type="GO" id="GO:0008253">
    <property type="term" value="F:5'-nucleotidase activity"/>
    <property type="evidence" value="ECO:0007669"/>
    <property type="project" value="UniProtKB-UniRule"/>
</dbReference>
<dbReference type="GO" id="GO:0004309">
    <property type="term" value="F:exopolyphosphatase activity"/>
    <property type="evidence" value="ECO:0007669"/>
    <property type="project" value="TreeGrafter"/>
</dbReference>
<dbReference type="GO" id="GO:0046872">
    <property type="term" value="F:metal ion binding"/>
    <property type="evidence" value="ECO:0007669"/>
    <property type="project" value="UniProtKB-UniRule"/>
</dbReference>
<dbReference type="GO" id="GO:0000166">
    <property type="term" value="F:nucleotide binding"/>
    <property type="evidence" value="ECO:0007669"/>
    <property type="project" value="UniProtKB-KW"/>
</dbReference>
<dbReference type="FunFam" id="3.40.1210.10:FF:000001">
    <property type="entry name" value="5'/3'-nucleotidase SurE"/>
    <property type="match status" value="1"/>
</dbReference>
<dbReference type="Gene3D" id="3.40.1210.10">
    <property type="entry name" value="Survival protein SurE-like phosphatase/nucleotidase"/>
    <property type="match status" value="1"/>
</dbReference>
<dbReference type="HAMAP" id="MF_00060">
    <property type="entry name" value="SurE"/>
    <property type="match status" value="1"/>
</dbReference>
<dbReference type="InterPro" id="IPR030048">
    <property type="entry name" value="SurE"/>
</dbReference>
<dbReference type="InterPro" id="IPR002828">
    <property type="entry name" value="SurE-like_Pase/nucleotidase"/>
</dbReference>
<dbReference type="InterPro" id="IPR036523">
    <property type="entry name" value="SurE-like_sf"/>
</dbReference>
<dbReference type="NCBIfam" id="NF001489">
    <property type="entry name" value="PRK00346.1-3"/>
    <property type="match status" value="1"/>
</dbReference>
<dbReference type="NCBIfam" id="NF001490">
    <property type="entry name" value="PRK00346.1-4"/>
    <property type="match status" value="1"/>
</dbReference>
<dbReference type="NCBIfam" id="TIGR00087">
    <property type="entry name" value="surE"/>
    <property type="match status" value="1"/>
</dbReference>
<dbReference type="PANTHER" id="PTHR30457">
    <property type="entry name" value="5'-NUCLEOTIDASE SURE"/>
    <property type="match status" value="1"/>
</dbReference>
<dbReference type="PANTHER" id="PTHR30457:SF12">
    <property type="entry name" value="5'_3'-NUCLEOTIDASE SURE"/>
    <property type="match status" value="1"/>
</dbReference>
<dbReference type="Pfam" id="PF01975">
    <property type="entry name" value="SurE"/>
    <property type="match status" value="1"/>
</dbReference>
<dbReference type="SUPFAM" id="SSF64167">
    <property type="entry name" value="SurE-like"/>
    <property type="match status" value="1"/>
</dbReference>
<gene>
    <name evidence="1" type="primary">surE</name>
    <name type="ordered locus">VCM66_0489</name>
</gene>
<comment type="function">
    <text evidence="1">Nucleotidase that shows phosphatase activity on nucleoside 5'-monophosphates.</text>
</comment>
<comment type="catalytic activity">
    <reaction evidence="1">
        <text>a ribonucleoside 5'-phosphate + H2O = a ribonucleoside + phosphate</text>
        <dbReference type="Rhea" id="RHEA:12484"/>
        <dbReference type="ChEBI" id="CHEBI:15377"/>
        <dbReference type="ChEBI" id="CHEBI:18254"/>
        <dbReference type="ChEBI" id="CHEBI:43474"/>
        <dbReference type="ChEBI" id="CHEBI:58043"/>
        <dbReference type="EC" id="3.1.3.5"/>
    </reaction>
</comment>
<comment type="cofactor">
    <cofactor evidence="1">
        <name>a divalent metal cation</name>
        <dbReference type="ChEBI" id="CHEBI:60240"/>
    </cofactor>
    <text evidence="1">Binds 1 divalent metal cation per subunit.</text>
</comment>
<comment type="subcellular location">
    <subcellularLocation>
        <location evidence="1">Cytoplasm</location>
    </subcellularLocation>
</comment>
<comment type="similarity">
    <text evidence="1">Belongs to the SurE nucleotidase family.</text>
</comment>
<sequence length="263" mass="28723">MNKRAAIQRAKIKMKILLSNDDGVYAQGIHALADALRDLAEIVIVAPDRNRSGASNSLTLEHPLRVSQIAENTYSVQGTPTDCVHFALNELMKDALPDLVLSGINHGANLGDDVLYSGTVAAAMEGHFLGVQSIAFSLAGTTHFASAAHFVRQLVEQHLANPIPTNRLLNVNIPDRPLELIQGIEVTRLGARHHAESMIKQKDPRGHDIYWLGPPGKEQDAGPGTDFHAIERGWVSLTPLQVDLTAHESLRSMDHWLKEKVNG</sequence>
<organism>
    <name type="scientific">Vibrio cholerae serotype O1 (strain M66-2)</name>
    <dbReference type="NCBI Taxonomy" id="579112"/>
    <lineage>
        <taxon>Bacteria</taxon>
        <taxon>Pseudomonadati</taxon>
        <taxon>Pseudomonadota</taxon>
        <taxon>Gammaproteobacteria</taxon>
        <taxon>Vibrionales</taxon>
        <taxon>Vibrionaceae</taxon>
        <taxon>Vibrio</taxon>
    </lineage>
</organism>
<reference key="1">
    <citation type="journal article" date="2008" name="PLoS ONE">
        <title>A recalibrated molecular clock and independent origins for the cholera pandemic clones.</title>
        <authorList>
            <person name="Feng L."/>
            <person name="Reeves P.R."/>
            <person name="Lan R."/>
            <person name="Ren Y."/>
            <person name="Gao C."/>
            <person name="Zhou Z."/>
            <person name="Ren Y."/>
            <person name="Cheng J."/>
            <person name="Wang W."/>
            <person name="Wang J."/>
            <person name="Qian W."/>
            <person name="Li D."/>
            <person name="Wang L."/>
        </authorList>
    </citation>
    <scope>NUCLEOTIDE SEQUENCE [LARGE SCALE GENOMIC DNA]</scope>
    <source>
        <strain>M66-2</strain>
    </source>
</reference>
<name>SURE_VIBCM</name>
<proteinExistence type="inferred from homology"/>
<keyword id="KW-0963">Cytoplasm</keyword>
<keyword id="KW-0378">Hydrolase</keyword>
<keyword id="KW-0479">Metal-binding</keyword>
<keyword id="KW-0547">Nucleotide-binding</keyword>
<evidence type="ECO:0000255" key="1">
    <source>
        <dbReference type="HAMAP-Rule" id="MF_00060"/>
    </source>
</evidence>